<reference key="1">
    <citation type="submission" date="2005-07" db="EMBL/GenBank/DDBJ databases">
        <title>Complete sequence of Synechococcus sp. CC9605.</title>
        <authorList>
            <consortium name="US DOE Joint Genome Institute"/>
            <person name="Copeland A."/>
            <person name="Lucas S."/>
            <person name="Lapidus A."/>
            <person name="Barry K."/>
            <person name="Detter J.C."/>
            <person name="Glavina T."/>
            <person name="Hammon N."/>
            <person name="Israni S."/>
            <person name="Pitluck S."/>
            <person name="Schmutz J."/>
            <person name="Martinez M."/>
            <person name="Larimer F."/>
            <person name="Land M."/>
            <person name="Kyrpides N."/>
            <person name="Ivanova N."/>
            <person name="Richardson P."/>
        </authorList>
    </citation>
    <scope>NUCLEOTIDE SEQUENCE [LARGE SCALE GENOMIC DNA]</scope>
    <source>
        <strain>CC9605</strain>
    </source>
</reference>
<keyword id="KW-0067">ATP-binding</keyword>
<keyword id="KW-0414">Isoprene biosynthesis</keyword>
<keyword id="KW-0418">Kinase</keyword>
<keyword id="KW-0547">Nucleotide-binding</keyword>
<keyword id="KW-0808">Transferase</keyword>
<comment type="function">
    <text evidence="1">Catalyzes the phosphorylation of the position 2 hydroxy group of 4-diphosphocytidyl-2C-methyl-D-erythritol.</text>
</comment>
<comment type="catalytic activity">
    <reaction evidence="1">
        <text>4-CDP-2-C-methyl-D-erythritol + ATP = 4-CDP-2-C-methyl-D-erythritol 2-phosphate + ADP + H(+)</text>
        <dbReference type="Rhea" id="RHEA:18437"/>
        <dbReference type="ChEBI" id="CHEBI:15378"/>
        <dbReference type="ChEBI" id="CHEBI:30616"/>
        <dbReference type="ChEBI" id="CHEBI:57823"/>
        <dbReference type="ChEBI" id="CHEBI:57919"/>
        <dbReference type="ChEBI" id="CHEBI:456216"/>
        <dbReference type="EC" id="2.7.1.148"/>
    </reaction>
</comment>
<comment type="pathway">
    <text evidence="1">Isoprenoid biosynthesis; isopentenyl diphosphate biosynthesis via DXP pathway; isopentenyl diphosphate from 1-deoxy-D-xylulose 5-phosphate: step 3/6.</text>
</comment>
<comment type="similarity">
    <text evidence="1">Belongs to the GHMP kinase family. IspE subfamily.</text>
</comment>
<organism>
    <name type="scientific">Synechococcus sp. (strain CC9605)</name>
    <dbReference type="NCBI Taxonomy" id="110662"/>
    <lineage>
        <taxon>Bacteria</taxon>
        <taxon>Bacillati</taxon>
        <taxon>Cyanobacteriota</taxon>
        <taxon>Cyanophyceae</taxon>
        <taxon>Synechococcales</taxon>
        <taxon>Synechococcaceae</taxon>
        <taxon>Synechococcus</taxon>
    </lineage>
</organism>
<accession>Q3AKD9</accession>
<name>ISPE_SYNSC</name>
<proteinExistence type="inferred from homology"/>
<feature type="chain" id="PRO_0000235140" description="4-diphosphocytidyl-2-C-methyl-D-erythritol kinase">
    <location>
        <begin position="1"/>
        <end position="307"/>
    </location>
</feature>
<feature type="active site" evidence="1">
    <location>
        <position position="9"/>
    </location>
</feature>
<feature type="active site" evidence="1">
    <location>
        <position position="136"/>
    </location>
</feature>
<feature type="binding site" evidence="1">
    <location>
        <begin position="94"/>
        <end position="104"/>
    </location>
    <ligand>
        <name>ATP</name>
        <dbReference type="ChEBI" id="CHEBI:30616"/>
    </ligand>
</feature>
<sequence>MITVSAPAKVNLHLEVLGLRSDGFHELAMVMQSIDLADRLSFQNTADAQLSLTCDDASLSVGDDNLILRAAQLLRDRSGFSELGASIHLEKRIPIGAGLAGGSSDGAAALVGLNALWGLGHSTADLERMAAELGSDMPFCVAGGCQLCFGRGEQLEAVPPTPQPLAVLLVKDPTVSVSTPWAYKRCRELKQSHYLADEAAFEQRRQALRSVDWLQPLRSDLPPPLRNDLQDVVAPETAAVRSALDLLDSVPQSLAVAMSGSGPSCFGLFSDLASCRHAQDQLATQLERAGLKAWSCALRSDGVRIEA</sequence>
<protein>
    <recommendedName>
        <fullName evidence="1">4-diphosphocytidyl-2-C-methyl-D-erythritol kinase</fullName>
        <shortName evidence="1">CMK</shortName>
        <ecNumber evidence="1">2.7.1.148</ecNumber>
    </recommendedName>
    <alternativeName>
        <fullName evidence="1">4-(cytidine-5'-diphospho)-2-C-methyl-D-erythritol kinase</fullName>
    </alternativeName>
</protein>
<dbReference type="EC" id="2.7.1.148" evidence="1"/>
<dbReference type="EMBL" id="CP000110">
    <property type="protein sequence ID" value="ABB34943.1"/>
    <property type="molecule type" value="Genomic_DNA"/>
</dbReference>
<dbReference type="RefSeq" id="WP_011364164.1">
    <property type="nucleotide sequence ID" value="NC_007516.1"/>
</dbReference>
<dbReference type="SMR" id="Q3AKD9"/>
<dbReference type="STRING" id="110662.Syncc9605_1188"/>
<dbReference type="KEGG" id="syd:Syncc9605_1188"/>
<dbReference type="eggNOG" id="COG1947">
    <property type="taxonomic scope" value="Bacteria"/>
</dbReference>
<dbReference type="HOGENOM" id="CLU_053057_1_1_3"/>
<dbReference type="OrthoDB" id="9809438at2"/>
<dbReference type="UniPathway" id="UPA00056">
    <property type="reaction ID" value="UER00094"/>
</dbReference>
<dbReference type="GO" id="GO:0050515">
    <property type="term" value="F:4-(cytidine 5'-diphospho)-2-C-methyl-D-erythritol kinase activity"/>
    <property type="evidence" value="ECO:0007669"/>
    <property type="project" value="UniProtKB-UniRule"/>
</dbReference>
<dbReference type="GO" id="GO:0005524">
    <property type="term" value="F:ATP binding"/>
    <property type="evidence" value="ECO:0007669"/>
    <property type="project" value="UniProtKB-UniRule"/>
</dbReference>
<dbReference type="GO" id="GO:0019288">
    <property type="term" value="P:isopentenyl diphosphate biosynthetic process, methylerythritol 4-phosphate pathway"/>
    <property type="evidence" value="ECO:0007669"/>
    <property type="project" value="UniProtKB-UniRule"/>
</dbReference>
<dbReference type="GO" id="GO:0016114">
    <property type="term" value="P:terpenoid biosynthetic process"/>
    <property type="evidence" value="ECO:0007669"/>
    <property type="project" value="InterPro"/>
</dbReference>
<dbReference type="Gene3D" id="3.30.230.10">
    <property type="match status" value="1"/>
</dbReference>
<dbReference type="Gene3D" id="3.30.70.890">
    <property type="entry name" value="GHMP kinase, C-terminal domain"/>
    <property type="match status" value="1"/>
</dbReference>
<dbReference type="HAMAP" id="MF_00061">
    <property type="entry name" value="IspE"/>
    <property type="match status" value="1"/>
</dbReference>
<dbReference type="InterPro" id="IPR013750">
    <property type="entry name" value="GHMP_kinase_C_dom"/>
</dbReference>
<dbReference type="InterPro" id="IPR036554">
    <property type="entry name" value="GHMP_kinase_C_sf"/>
</dbReference>
<dbReference type="InterPro" id="IPR006204">
    <property type="entry name" value="GHMP_kinase_N_dom"/>
</dbReference>
<dbReference type="InterPro" id="IPR004424">
    <property type="entry name" value="IspE"/>
</dbReference>
<dbReference type="InterPro" id="IPR020568">
    <property type="entry name" value="Ribosomal_Su5_D2-typ_SF"/>
</dbReference>
<dbReference type="InterPro" id="IPR014721">
    <property type="entry name" value="Ribsml_uS5_D2-typ_fold_subgr"/>
</dbReference>
<dbReference type="NCBIfam" id="TIGR00154">
    <property type="entry name" value="ispE"/>
    <property type="match status" value="1"/>
</dbReference>
<dbReference type="PANTHER" id="PTHR43527">
    <property type="entry name" value="4-DIPHOSPHOCYTIDYL-2-C-METHYL-D-ERYTHRITOL KINASE, CHLOROPLASTIC"/>
    <property type="match status" value="1"/>
</dbReference>
<dbReference type="PANTHER" id="PTHR43527:SF2">
    <property type="entry name" value="4-DIPHOSPHOCYTIDYL-2-C-METHYL-D-ERYTHRITOL KINASE, CHLOROPLASTIC"/>
    <property type="match status" value="1"/>
</dbReference>
<dbReference type="Pfam" id="PF08544">
    <property type="entry name" value="GHMP_kinases_C"/>
    <property type="match status" value="1"/>
</dbReference>
<dbReference type="Pfam" id="PF00288">
    <property type="entry name" value="GHMP_kinases_N"/>
    <property type="match status" value="1"/>
</dbReference>
<dbReference type="PIRSF" id="PIRSF010376">
    <property type="entry name" value="IspE"/>
    <property type="match status" value="1"/>
</dbReference>
<dbReference type="SUPFAM" id="SSF55060">
    <property type="entry name" value="GHMP Kinase, C-terminal domain"/>
    <property type="match status" value="1"/>
</dbReference>
<dbReference type="SUPFAM" id="SSF54211">
    <property type="entry name" value="Ribosomal protein S5 domain 2-like"/>
    <property type="match status" value="1"/>
</dbReference>
<evidence type="ECO:0000255" key="1">
    <source>
        <dbReference type="HAMAP-Rule" id="MF_00061"/>
    </source>
</evidence>
<gene>
    <name evidence="1" type="primary">ispE</name>
    <name type="ordered locus">Syncc9605_1188</name>
</gene>